<sequence>MPSEKTFKQRRTFEQRVEDVRLIREQHPTKIPVIIERYKGEKQLPVLDKTKFLVPDHVNMSELIKIIRRRLQLNANQAFFLLVNGHSMVSVSTPICEVYESEKDEDGFLYMVYASQETFGMKLSV</sequence>
<comment type="function">
    <text evidence="3">Ubiquitin-like modifier involved in formation of autophagosomal vacuoles (autophagosomes). Plays a role in mitophagy which contributes to regulate mitochondrial quantity and quality by eliminating the mitochondria to a basal level to fulfill cellular energy requirements and preventing excess ROS production. In response to cellular stress and upon mitochondria fission, binds C-18 ceramides and anchors autophagolysosomes to outer mitochondrial membranes to eliminate damaged mitochondria. While LC3s are involved in elongation of the phagophore membrane, the GABARAP/GATE-16 subfamily is essential for a later stage in autophagosome maturation. Promotes primary ciliogenesis by removing OFD1 from centriolar satellites via the autophagic pathway. Through its interaction with the reticulophagy receptor TEX264, participates in the remodeling of subdomains of the endoplasmic reticulum into autophagosomes upon nutrient stress, which then fuse with lysosomes for endoplasmic reticulum turnover. Upon nutrient stress, directly recruits cofactor JMY to the phagophore membrane surfaces and promotes JMY's actin nucleation activity and autophagosome biogenesis during autophagy.</text>
</comment>
<comment type="subunit">
    <text evidence="1 2 3">3 different light chains, LC1 (a cleavage product of MAP1B), LC2 (a cleavage product of MAP1A) and LC3 (produced by one of the MAP1LC3 genes), can associate with the MAP1A or MAP1B heavy chains (By similarity). Interacts at microtubules with CABP1 (via EF-hands 1 and 2) but not with calmodulin. Interacts with FYCO1 (via C-terminus). Interacts with TP53INP1 and TP53INP2 (By similarity). Interacts with TBC1D25 (By similarity). Directly interacts with SQSTM1; this interaction leads to MAP1LC3B recruitment to inclusion bodies containing polyubiquitinated protein aggregates and to inclusion body degradation by autophagy. Interacts with ATG4B, MAPK15 and BNIP3. Interacts with MAPB1, KEAP1, PCM1, OFD1, CEP131, and TECPR2. Interacts with TBC1D5. Found in a complex with UBQLN1 and UBQLN2. Interacts with UBQLN4 (via STI1 1 and 2 domains). Interacts with UBQLN1 in the presence of UBQLN4. Interacts with ATG13. Interacts with reticulophagy regulators RETREG1, RETREG2 and RETREG3 (By similarity). Interacts with PLCL1; the interaction inhibits autophagosome formation. Interacts with TRIM16. Interacts with CRY1 and PER2 (By similarity). Interacts with the reticulophagy receptor TEX264 (By similarity). Membrane-bound form LC3-II interacts with PHB1 and PHB2; the interaction takes place upon Parkin-mediated mitochondrial damage (By similarity). Interacts with PJVK; the interaction is direct (By similarity). Interacts with KBTBD6 and KBTBD7; the interaction is direct (By similarity). Interacts with AMBRA1 (via LIR motif) (By similarity). Interacts with JMY; the interaction results in the activation of JYM's nucleation activity in the cytoplasm (By similarity). Interacts with MOAP1 (via LIR motif) (By similarity). Interacts with TAX1BP1 (By similarity). Interacts with IRGM (By similarity). Interacts with STX17 (By similarity). Interacts (the lipidate and non-lipidated LC3 form) with DNM2; this interaction mediates recycling endosome scission leading to autophagosome release (By similarity). Interacts with IRGQ (By similarity).</text>
</comment>
<comment type="subcellular location">
    <subcellularLocation>
        <location evidence="2">Cytoplasmic vesicle</location>
        <location evidence="2">Autophagosome membrane</location>
        <topology evidence="3">Lipid-anchor</topology>
    </subcellularLocation>
    <subcellularLocation>
        <location evidence="2">Endomembrane system</location>
        <topology evidence="3">Lipid-anchor</topology>
    </subcellularLocation>
    <subcellularLocation>
        <location evidence="3">Mitochondrion membrane</location>
        <topology evidence="3">Lipid-anchor</topology>
    </subcellularLocation>
    <subcellularLocation>
        <location evidence="2">Cytoplasm</location>
        <location evidence="2">Cytoskeleton</location>
    </subcellularLocation>
    <subcellularLocation>
        <location evidence="3">Cytoplasmic vesicle</location>
    </subcellularLocation>
    <text evidence="3">LC3-II binds to the autophagic membranes. LC3-II localizes with the mitochondrial inner membrane during Parkin-mediated mitophagy (By similarity). Also localizes to discrete punctae along the ciliary axoneme (By similarity).</text>
</comment>
<comment type="PTM">
    <text evidence="2 3">The precursor molecule is cleaved by ATG4 (ATG4A, ATG4B, ATG4C or ATG4D) to expose the glycine at the C-terminus and form the cytosolic form, LC3-I. The processed form is then activated by APG7L/ATG7, transferred to ATG3 and conjugated to phosphatidylethanolamine (PE) phospholipid to form the membrane-bound form, LC3-II. During non-canonical autophagy, the processed form is conjugated to phosphatidylserine (PS) phospholipid. ATG4 proteins also mediate the delipidation of PE-conjugated forms. In addition, ATG4B and ATG4D mediate delipidation of ATG8 proteins conjugated to PS during non-canonical autophagy. ATG4B constitutes the major protein for proteolytic activation (By similarity). ATG4D is the main enzyme for delipidation activity (By similarity).</text>
</comment>
<comment type="PTM">
    <text evidence="3">Phosphorylation by PKA inhibits conjugation of phosphatidylethanolamine (PE). Interaction with MAPK15 reduces the inhibitory phosphorylation and increases autophagy activity.</text>
</comment>
<comment type="PTM">
    <text evidence="3">Ubiquitinated by BIRC6; this activity is inhibited by DIABLO/SMAC.</text>
</comment>
<comment type="similarity">
    <text evidence="5">Belongs to the ATG8 family.</text>
</comment>
<comment type="caution">
    <text evidence="5">PubMed:9557703 sequence originates from strain Jacp of pestivirus type 1 which seems to contain a cellular insertion of part of the bovine host MAP1LC3 gene.</text>
</comment>
<evidence type="ECO:0000250" key="1">
    <source>
        <dbReference type="UniProtKB" id="Q62625"/>
    </source>
</evidence>
<evidence type="ECO:0000250" key="2">
    <source>
        <dbReference type="UniProtKB" id="Q9CQV6"/>
    </source>
</evidence>
<evidence type="ECO:0000250" key="3">
    <source>
        <dbReference type="UniProtKB" id="Q9GZQ8"/>
    </source>
</evidence>
<evidence type="ECO:0000269" key="4">
    <source>
    </source>
</evidence>
<evidence type="ECO:0000305" key="5"/>
<accession>O41515</accession>
<accession>Q6PZ01</accession>
<name>MLP3B_BOVIN</name>
<keyword id="KW-0072">Autophagy</keyword>
<keyword id="KW-0963">Cytoplasm</keyword>
<keyword id="KW-0968">Cytoplasmic vesicle</keyword>
<keyword id="KW-0206">Cytoskeleton</keyword>
<keyword id="KW-0903">Direct protein sequencing</keyword>
<keyword id="KW-0449">Lipoprotein</keyword>
<keyword id="KW-0472">Membrane</keyword>
<keyword id="KW-0493">Microtubule</keyword>
<keyword id="KW-0496">Mitochondrion</keyword>
<keyword id="KW-0597">Phosphoprotein</keyword>
<keyword id="KW-1185">Reference proteome</keyword>
<keyword id="KW-0832">Ubl conjugation</keyword>
<keyword id="KW-0833">Ubl conjugation pathway</keyword>
<dbReference type="EMBL" id="AY570553">
    <property type="protein sequence ID" value="AAS78585.1"/>
    <property type="molecule type" value="mRNA"/>
</dbReference>
<dbReference type="EMBL" id="BC102891">
    <property type="protein sequence ID" value="AAI02892.1"/>
    <property type="molecule type" value="mRNA"/>
</dbReference>
<dbReference type="EMBL" id="U80885">
    <property type="protein sequence ID" value="AAB72082.1"/>
    <property type="status" value="ALT_SEQ"/>
    <property type="molecule type" value="Genomic_RNA"/>
</dbReference>
<dbReference type="RefSeq" id="NP_001001169.1">
    <property type="nucleotide sequence ID" value="NM_001001169.1"/>
</dbReference>
<dbReference type="BMRB" id="O41515"/>
<dbReference type="SMR" id="O41515"/>
<dbReference type="FunCoup" id="O41515">
    <property type="interactions" value="1232"/>
</dbReference>
<dbReference type="IntAct" id="O41515">
    <property type="interactions" value="1"/>
</dbReference>
<dbReference type="STRING" id="9913.ENSBTAP00000015449"/>
<dbReference type="MEROPS" id="S31.001"/>
<dbReference type="PaxDb" id="9913-ENSBTAP00000015449"/>
<dbReference type="Ensembl" id="ENSBTAT00000015449.6">
    <property type="protein sequence ID" value="ENSBTAP00000015449.5"/>
    <property type="gene ID" value="ENSBTAG00000011632.7"/>
</dbReference>
<dbReference type="GeneID" id="408001"/>
<dbReference type="KEGG" id="bta:408001"/>
<dbReference type="CTD" id="81631"/>
<dbReference type="VEuPathDB" id="HostDB:ENSBTAG00000011632"/>
<dbReference type="eggNOG" id="KOG1654">
    <property type="taxonomic scope" value="Eukaryota"/>
</dbReference>
<dbReference type="GeneTree" id="ENSGT00940000154158"/>
<dbReference type="HOGENOM" id="CLU_119276_1_0_1"/>
<dbReference type="InParanoid" id="O41515"/>
<dbReference type="OMA" id="MNMYQLY"/>
<dbReference type="OrthoDB" id="6738456at2759"/>
<dbReference type="TreeFam" id="TF312964"/>
<dbReference type="Reactome" id="R-BTA-1632852">
    <property type="pathway name" value="Macroautophagy"/>
</dbReference>
<dbReference type="Reactome" id="R-BTA-5205685">
    <property type="pathway name" value="PINK1-PRKN Mediated Mitophagy"/>
</dbReference>
<dbReference type="Reactome" id="R-BTA-8854214">
    <property type="pathway name" value="TBC/RABGAPs"/>
</dbReference>
<dbReference type="Reactome" id="R-BTA-8934903">
    <property type="pathway name" value="Receptor Mediated Mitophagy"/>
</dbReference>
<dbReference type="Reactome" id="R-BTA-9664873">
    <property type="pathway name" value="Pexophagy"/>
</dbReference>
<dbReference type="Reactome" id="R-BTA-9755511">
    <property type="pathway name" value="KEAP1-NFE2L2 pathway"/>
</dbReference>
<dbReference type="Proteomes" id="UP000009136">
    <property type="component" value="Chromosome 18"/>
</dbReference>
<dbReference type="Bgee" id="ENSBTAG00000011632">
    <property type="expression patterns" value="Expressed in occipital lobe and 103 other cell types or tissues"/>
</dbReference>
<dbReference type="GO" id="GO:0005776">
    <property type="term" value="C:autophagosome"/>
    <property type="evidence" value="ECO:0000250"/>
    <property type="project" value="UniProtKB"/>
</dbReference>
<dbReference type="GO" id="GO:0000421">
    <property type="term" value="C:autophagosome membrane"/>
    <property type="evidence" value="ECO:0000318"/>
    <property type="project" value="GO_Central"/>
</dbReference>
<dbReference type="GO" id="GO:0005930">
    <property type="term" value="C:axoneme"/>
    <property type="evidence" value="ECO:0000250"/>
    <property type="project" value="UniProtKB"/>
</dbReference>
<dbReference type="GO" id="GO:0005737">
    <property type="term" value="C:cytoplasm"/>
    <property type="evidence" value="ECO:0000250"/>
    <property type="project" value="UniProtKB"/>
</dbReference>
<dbReference type="GO" id="GO:0031410">
    <property type="term" value="C:cytoplasmic vesicle"/>
    <property type="evidence" value="ECO:0000250"/>
    <property type="project" value="UniProtKB"/>
</dbReference>
<dbReference type="GO" id="GO:0012505">
    <property type="term" value="C:endomembrane system"/>
    <property type="evidence" value="ECO:0007669"/>
    <property type="project" value="UniProtKB-SubCell"/>
</dbReference>
<dbReference type="GO" id="GO:0005874">
    <property type="term" value="C:microtubule"/>
    <property type="evidence" value="ECO:0007669"/>
    <property type="project" value="UniProtKB-KW"/>
</dbReference>
<dbReference type="GO" id="GO:0031966">
    <property type="term" value="C:mitochondrial membrane"/>
    <property type="evidence" value="ECO:0007669"/>
    <property type="project" value="UniProtKB-SubCell"/>
</dbReference>
<dbReference type="GO" id="GO:0031090">
    <property type="term" value="C:organelle membrane"/>
    <property type="evidence" value="ECO:0000250"/>
    <property type="project" value="UniProtKB"/>
</dbReference>
<dbReference type="GO" id="GO:0008017">
    <property type="term" value="F:microtubule binding"/>
    <property type="evidence" value="ECO:0000318"/>
    <property type="project" value="GO_Central"/>
</dbReference>
<dbReference type="GO" id="GO:0008429">
    <property type="term" value="F:phosphatidylethanolamine binding"/>
    <property type="evidence" value="ECO:0000318"/>
    <property type="project" value="GO_Central"/>
</dbReference>
<dbReference type="GO" id="GO:0031625">
    <property type="term" value="F:ubiquitin protein ligase binding"/>
    <property type="evidence" value="ECO:0000318"/>
    <property type="project" value="GO_Central"/>
</dbReference>
<dbReference type="GO" id="GO:0000045">
    <property type="term" value="P:autophagosome assembly"/>
    <property type="evidence" value="ECO:0000250"/>
    <property type="project" value="UniProtKB"/>
</dbReference>
<dbReference type="GO" id="GO:0097352">
    <property type="term" value="P:autophagosome maturation"/>
    <property type="evidence" value="ECO:0000318"/>
    <property type="project" value="GO_Central"/>
</dbReference>
<dbReference type="GO" id="GO:0006995">
    <property type="term" value="P:cellular response to nitrogen starvation"/>
    <property type="evidence" value="ECO:0000318"/>
    <property type="project" value="GO_Central"/>
</dbReference>
<dbReference type="GO" id="GO:0009267">
    <property type="term" value="P:cellular response to starvation"/>
    <property type="evidence" value="ECO:0000250"/>
    <property type="project" value="UniProtKB"/>
</dbReference>
<dbReference type="GO" id="GO:0000423">
    <property type="term" value="P:mitophagy"/>
    <property type="evidence" value="ECO:0000250"/>
    <property type="project" value="UniProtKB"/>
</dbReference>
<dbReference type="CDD" id="cd17235">
    <property type="entry name" value="Ubl_ATG8_MAP1LC3B"/>
    <property type="match status" value="1"/>
</dbReference>
<dbReference type="FunFam" id="3.10.20.90:FF:000059">
    <property type="entry name" value="Microtubule-associated proteins 1A/1B light chain 3B"/>
    <property type="match status" value="1"/>
</dbReference>
<dbReference type="Gene3D" id="3.10.20.90">
    <property type="entry name" value="Phosphatidylinositol 3-kinase Catalytic Subunit, Chain A, domain 1"/>
    <property type="match status" value="1"/>
</dbReference>
<dbReference type="InterPro" id="IPR004241">
    <property type="entry name" value="Atg8-like"/>
</dbReference>
<dbReference type="InterPro" id="IPR029071">
    <property type="entry name" value="Ubiquitin-like_domsf"/>
</dbReference>
<dbReference type="PANTHER" id="PTHR10969">
    <property type="entry name" value="MICROTUBULE-ASSOCIATED PROTEINS 1A/1B LIGHT CHAIN 3-RELATED"/>
    <property type="match status" value="1"/>
</dbReference>
<dbReference type="Pfam" id="PF02991">
    <property type="entry name" value="ATG8"/>
    <property type="match status" value="1"/>
</dbReference>
<dbReference type="SUPFAM" id="SSF54236">
    <property type="entry name" value="Ubiquitin-like"/>
    <property type="match status" value="1"/>
</dbReference>
<organism>
    <name type="scientific">Bos taurus</name>
    <name type="common">Bovine</name>
    <dbReference type="NCBI Taxonomy" id="9913"/>
    <lineage>
        <taxon>Eukaryota</taxon>
        <taxon>Metazoa</taxon>
        <taxon>Chordata</taxon>
        <taxon>Craniata</taxon>
        <taxon>Vertebrata</taxon>
        <taxon>Euteleostomi</taxon>
        <taxon>Mammalia</taxon>
        <taxon>Eutheria</taxon>
        <taxon>Laurasiatheria</taxon>
        <taxon>Artiodactyla</taxon>
        <taxon>Ruminantia</taxon>
        <taxon>Pecora</taxon>
        <taxon>Bovidae</taxon>
        <taxon>Bovinae</taxon>
        <taxon>Bos</taxon>
    </lineage>
</organism>
<proteinExistence type="evidence at protein level"/>
<gene>
    <name evidence="3" type="primary">MAP1LC3B</name>
    <name type="synonym">MAP1ALC3</name>
    <name type="synonym">MAP1LC3</name>
</gene>
<reference key="1">
    <citation type="journal article" date="2004" name="J. Virol.">
        <title>Processing of a pestivirus protein by a cellular protease specific for light chain 3 of microtubule-associated proteins.</title>
        <authorList>
            <person name="Fricke J."/>
            <person name="Voss C."/>
            <person name="Thumm M."/>
            <person name="Meyers G."/>
        </authorList>
    </citation>
    <scope>NUCLEOTIDE SEQUENCE [MRNA]</scope>
</reference>
<reference key="2">
    <citation type="submission" date="2005-08" db="EMBL/GenBank/DDBJ databases">
        <authorList>
            <consortium name="NIH - Mammalian Gene Collection (MGC) project"/>
        </authorList>
    </citation>
    <scope>NUCLEOTIDE SEQUENCE [LARGE SCALE MRNA]</scope>
    <source>
        <strain>Crossbred X Angus</strain>
        <tissue>Liver</tissue>
    </source>
</reference>
<reference key="3">
    <citation type="journal article" date="1994" name="J. Biol. Chem.">
        <title>Molecular characterization of light chain 3. A microtubule binding subunit of MAP1A and MAP1B.</title>
        <authorList>
            <person name="Mann S.S."/>
            <person name="Hammarback J.A."/>
        </authorList>
    </citation>
    <scope>PROTEIN SEQUENCE OF 2-21</scope>
    <source>
        <tissue>Brain</tissue>
    </source>
</reference>
<reference key="4">
    <citation type="journal article" date="1998" name="J. Virol.">
        <title>Insertion of a sequence encoding light chain 3 of microtubule-associated proteins 1A and 1B in a pestivirus genome: connection with virus cytopathogenicity and induction of lethal disease in cattle.</title>
        <authorList>
            <person name="Meyers G."/>
            <person name="Stoll D."/>
            <person name="Gunn M."/>
        </authorList>
    </citation>
    <scope>NUCLEOTIDE SEQUENCE [GENOMIC RNA] OF 6-120</scope>
</reference>
<reference key="5">
    <citation type="journal article" date="2004" name="Int. J. Biochem. Cell Biol.">
        <title>LC3 conjugation system in mammalian autophagy.</title>
        <authorList>
            <person name="Tanida I."/>
            <person name="Ueno T."/>
            <person name="Kominami E."/>
        </authorList>
    </citation>
    <scope>REVIEW</scope>
</reference>
<feature type="initiator methionine" description="Removed" evidence="4">
    <location>
        <position position="1"/>
    </location>
</feature>
<feature type="chain" id="PRO_0000438650" description="Microtubule-associated protein 1 light chain 3 beta">
    <location>
        <begin position="2"/>
        <end position="120"/>
    </location>
</feature>
<feature type="propeptide" id="PRO_0000212361" description="Removed in mature form">
    <location>
        <begin position="121"/>
        <end position="125"/>
    </location>
</feature>
<feature type="site" description="Cleavage; by ATG4B" evidence="3">
    <location>
        <begin position="120"/>
        <end position="121"/>
    </location>
</feature>
<feature type="lipid moiety-binding region" description="Phosphatidylethanolamine amidated glycine; alternate" evidence="3">
    <location>
        <position position="120"/>
    </location>
</feature>
<feature type="lipid moiety-binding region" description="Phosphatidylserine amidated glycine; alternate" evidence="3">
    <location>
        <position position="120"/>
    </location>
</feature>
<feature type="sequence conflict" description="In Ref. 3; AA sequence." evidence="5" ref="3">
    <original>EK</original>
    <variation>DR</variation>
    <location>
        <begin position="4"/>
        <end position="5"/>
    </location>
</feature>
<feature type="sequence conflict" description="In Ref. 3; AA sequence." evidence="5" ref="3">
    <original>T</original>
    <variation>P</variation>
    <location>
        <position position="6"/>
    </location>
</feature>
<feature type="sequence conflict" description="In Ref. 3; AA sequence." evidence="5" ref="3">
    <original>T</original>
    <variation>S</variation>
    <location>
        <position position="12"/>
    </location>
</feature>
<feature type="sequence conflict" description="In Ref. 3; AA sequence." evidence="5" ref="3">
    <original>EQR</original>
    <variation>DDV</variation>
    <location>
        <begin position="14"/>
        <end position="16"/>
    </location>
</feature>
<feature type="sequence conflict" description="In Ref. 3; AA sequence." evidence="5" ref="3">
    <original>EDVR</original>
    <variation>KEVQ</variation>
    <location>
        <begin position="18"/>
        <end position="21"/>
    </location>
</feature>
<feature type="sequence conflict" description="In Ref. 4; AAB72082." evidence="5" ref="4">
    <original>M</original>
    <variation>T</variation>
    <location>
        <position position="111"/>
    </location>
</feature>
<protein>
    <recommendedName>
        <fullName>Microtubule-associated protein 1 light chain 3 beta</fullName>
    </recommendedName>
    <alternativeName>
        <fullName>Autophagy-related protein LC3 B</fullName>
    </alternativeName>
    <alternativeName>
        <fullName>Autophagy-related ubiquitin-like modifier LC3 B</fullName>
    </alternativeName>
    <alternativeName>
        <fullName>MAP1 light chain 3-like protein 2</fullName>
    </alternativeName>
    <alternativeName>
        <fullName evidence="3">Microtubule-associated proteins 1A/1B light chain 3B</fullName>
        <shortName>MAP1A/MAP1B LC3 B</shortName>
        <shortName>MAP1A/MAP1B light chain 3 B</shortName>
    </alternativeName>
</protein>